<dbReference type="EC" id="6.3.1.5" evidence="1"/>
<dbReference type="EMBL" id="CP001120">
    <property type="protein sequence ID" value="ACF66936.1"/>
    <property type="molecule type" value="Genomic_DNA"/>
</dbReference>
<dbReference type="RefSeq" id="WP_000174982.1">
    <property type="nucleotide sequence ID" value="NC_011083.1"/>
</dbReference>
<dbReference type="SMR" id="B4TGE8"/>
<dbReference type="KEGG" id="seh:SeHA_C1439"/>
<dbReference type="HOGENOM" id="CLU_059327_3_0_6"/>
<dbReference type="UniPathway" id="UPA00253">
    <property type="reaction ID" value="UER00333"/>
</dbReference>
<dbReference type="Proteomes" id="UP000001866">
    <property type="component" value="Chromosome"/>
</dbReference>
<dbReference type="GO" id="GO:0005737">
    <property type="term" value="C:cytoplasm"/>
    <property type="evidence" value="ECO:0007669"/>
    <property type="project" value="InterPro"/>
</dbReference>
<dbReference type="GO" id="GO:0005524">
    <property type="term" value="F:ATP binding"/>
    <property type="evidence" value="ECO:0007669"/>
    <property type="project" value="UniProtKB-UniRule"/>
</dbReference>
<dbReference type="GO" id="GO:0004359">
    <property type="term" value="F:glutaminase activity"/>
    <property type="evidence" value="ECO:0007669"/>
    <property type="project" value="InterPro"/>
</dbReference>
<dbReference type="GO" id="GO:0046872">
    <property type="term" value="F:metal ion binding"/>
    <property type="evidence" value="ECO:0007669"/>
    <property type="project" value="UniProtKB-KW"/>
</dbReference>
<dbReference type="GO" id="GO:0003952">
    <property type="term" value="F:NAD+ synthase (glutamine-hydrolyzing) activity"/>
    <property type="evidence" value="ECO:0007669"/>
    <property type="project" value="InterPro"/>
</dbReference>
<dbReference type="GO" id="GO:0008795">
    <property type="term" value="F:NAD+ synthase activity"/>
    <property type="evidence" value="ECO:0007669"/>
    <property type="project" value="UniProtKB-UniRule"/>
</dbReference>
<dbReference type="GO" id="GO:0009435">
    <property type="term" value="P:NAD biosynthetic process"/>
    <property type="evidence" value="ECO:0007669"/>
    <property type="project" value="UniProtKB-UniRule"/>
</dbReference>
<dbReference type="CDD" id="cd00553">
    <property type="entry name" value="NAD_synthase"/>
    <property type="match status" value="1"/>
</dbReference>
<dbReference type="FunFam" id="3.40.50.620:FF:000015">
    <property type="entry name" value="NH(3)-dependent NAD(+) synthetase"/>
    <property type="match status" value="1"/>
</dbReference>
<dbReference type="Gene3D" id="3.40.50.620">
    <property type="entry name" value="HUPs"/>
    <property type="match status" value="1"/>
</dbReference>
<dbReference type="HAMAP" id="MF_00193">
    <property type="entry name" value="NadE_ammonia_dep"/>
    <property type="match status" value="1"/>
</dbReference>
<dbReference type="InterPro" id="IPR022310">
    <property type="entry name" value="NAD/GMP_synthase"/>
</dbReference>
<dbReference type="InterPro" id="IPR003694">
    <property type="entry name" value="NAD_synthase"/>
</dbReference>
<dbReference type="InterPro" id="IPR022926">
    <property type="entry name" value="NH(3)-dep_NAD(+)_synth"/>
</dbReference>
<dbReference type="InterPro" id="IPR014729">
    <property type="entry name" value="Rossmann-like_a/b/a_fold"/>
</dbReference>
<dbReference type="NCBIfam" id="TIGR00552">
    <property type="entry name" value="nadE"/>
    <property type="match status" value="1"/>
</dbReference>
<dbReference type="NCBIfam" id="NF001979">
    <property type="entry name" value="PRK00768.1"/>
    <property type="match status" value="1"/>
</dbReference>
<dbReference type="PANTHER" id="PTHR23090">
    <property type="entry name" value="NH 3 /GLUTAMINE-DEPENDENT NAD + SYNTHETASE"/>
    <property type="match status" value="1"/>
</dbReference>
<dbReference type="PANTHER" id="PTHR23090:SF7">
    <property type="entry name" value="NH(3)-DEPENDENT NAD(+) SYNTHETASE"/>
    <property type="match status" value="1"/>
</dbReference>
<dbReference type="Pfam" id="PF02540">
    <property type="entry name" value="NAD_synthase"/>
    <property type="match status" value="1"/>
</dbReference>
<dbReference type="SUPFAM" id="SSF52402">
    <property type="entry name" value="Adenine nucleotide alpha hydrolases-like"/>
    <property type="match status" value="1"/>
</dbReference>
<reference key="1">
    <citation type="journal article" date="2011" name="J. Bacteriol.">
        <title>Comparative genomics of 28 Salmonella enterica isolates: evidence for CRISPR-mediated adaptive sublineage evolution.</title>
        <authorList>
            <person name="Fricke W.F."/>
            <person name="Mammel M.K."/>
            <person name="McDermott P.F."/>
            <person name="Tartera C."/>
            <person name="White D.G."/>
            <person name="Leclerc J.E."/>
            <person name="Ravel J."/>
            <person name="Cebula T.A."/>
        </authorList>
    </citation>
    <scope>NUCLEOTIDE SEQUENCE [LARGE SCALE GENOMIC DNA]</scope>
    <source>
        <strain>SL476</strain>
    </source>
</reference>
<sequence length="275" mass="30446">MTLQQEIIQALGAKPHINPEEEIRRSVDFLKAYLKTYPFLKSLVLGISGGQDSTLAGKLSQMAIAELREETGDNALQFIAVRLPYGVQADEQDCQDAIAFIQPDRVLTVNIKGAVLASEQALREAGIELSDFVRGNEKARERMKAQYSIAGMTHGVVVGTDHAAEAITGFFTKYGDGGTDINPLHRLNKRQGKQLLAALGCPEHLYKKVPTADLEDDRPSLPDEAALGVTYDNIDDYLEGKTLDSAIAKTIEGWYVKTEHKRRLPITVFDDFWKK</sequence>
<accession>B4TGE8</accession>
<gene>
    <name evidence="1" type="primary">nadE</name>
    <name type="ordered locus">SeHA_C1439</name>
</gene>
<protein>
    <recommendedName>
        <fullName evidence="1">NH(3)-dependent NAD(+) synthetase</fullName>
        <ecNumber evidence="1">6.3.1.5</ecNumber>
    </recommendedName>
</protein>
<comment type="function">
    <text evidence="1">Catalyzes the ATP-dependent amidation of deamido-NAD to form NAD. Uses ammonia as a nitrogen source.</text>
</comment>
<comment type="catalytic activity">
    <reaction evidence="1">
        <text>deamido-NAD(+) + NH4(+) + ATP = AMP + diphosphate + NAD(+) + H(+)</text>
        <dbReference type="Rhea" id="RHEA:21188"/>
        <dbReference type="ChEBI" id="CHEBI:15378"/>
        <dbReference type="ChEBI" id="CHEBI:28938"/>
        <dbReference type="ChEBI" id="CHEBI:30616"/>
        <dbReference type="ChEBI" id="CHEBI:33019"/>
        <dbReference type="ChEBI" id="CHEBI:57540"/>
        <dbReference type="ChEBI" id="CHEBI:58437"/>
        <dbReference type="ChEBI" id="CHEBI:456215"/>
        <dbReference type="EC" id="6.3.1.5"/>
    </reaction>
</comment>
<comment type="pathway">
    <text evidence="1">Cofactor biosynthesis; NAD(+) biosynthesis; NAD(+) from deamido-NAD(+) (ammonia route): step 1/1.</text>
</comment>
<comment type="subunit">
    <text evidence="1">Homodimer.</text>
</comment>
<comment type="similarity">
    <text evidence="1">Belongs to the NAD synthetase family.</text>
</comment>
<proteinExistence type="inferred from homology"/>
<evidence type="ECO:0000255" key="1">
    <source>
        <dbReference type="HAMAP-Rule" id="MF_00193"/>
    </source>
</evidence>
<organism>
    <name type="scientific">Salmonella heidelberg (strain SL476)</name>
    <dbReference type="NCBI Taxonomy" id="454169"/>
    <lineage>
        <taxon>Bacteria</taxon>
        <taxon>Pseudomonadati</taxon>
        <taxon>Pseudomonadota</taxon>
        <taxon>Gammaproteobacteria</taxon>
        <taxon>Enterobacterales</taxon>
        <taxon>Enterobacteriaceae</taxon>
        <taxon>Salmonella</taxon>
    </lineage>
</organism>
<name>NADE_SALHS</name>
<keyword id="KW-0067">ATP-binding</keyword>
<keyword id="KW-0436">Ligase</keyword>
<keyword id="KW-0460">Magnesium</keyword>
<keyword id="KW-0479">Metal-binding</keyword>
<keyword id="KW-0520">NAD</keyword>
<keyword id="KW-0547">Nucleotide-binding</keyword>
<feature type="chain" id="PRO_1000099041" description="NH(3)-dependent NAD(+) synthetase">
    <location>
        <begin position="1"/>
        <end position="275"/>
    </location>
</feature>
<feature type="binding site" evidence="1">
    <location>
        <begin position="46"/>
        <end position="53"/>
    </location>
    <ligand>
        <name>ATP</name>
        <dbReference type="ChEBI" id="CHEBI:30616"/>
    </ligand>
</feature>
<feature type="binding site" evidence="1">
    <location>
        <position position="52"/>
    </location>
    <ligand>
        <name>Mg(2+)</name>
        <dbReference type="ChEBI" id="CHEBI:18420"/>
    </ligand>
</feature>
<feature type="binding site" evidence="1">
    <location>
        <position position="140"/>
    </location>
    <ligand>
        <name>deamido-NAD(+)</name>
        <dbReference type="ChEBI" id="CHEBI:58437"/>
    </ligand>
</feature>
<feature type="binding site" evidence="1">
    <location>
        <position position="160"/>
    </location>
    <ligand>
        <name>ATP</name>
        <dbReference type="ChEBI" id="CHEBI:30616"/>
    </ligand>
</feature>
<feature type="binding site" evidence="1">
    <location>
        <position position="165"/>
    </location>
    <ligand>
        <name>Mg(2+)</name>
        <dbReference type="ChEBI" id="CHEBI:18420"/>
    </ligand>
</feature>
<feature type="binding site" evidence="1">
    <location>
        <position position="173"/>
    </location>
    <ligand>
        <name>deamido-NAD(+)</name>
        <dbReference type="ChEBI" id="CHEBI:58437"/>
    </ligand>
</feature>
<feature type="binding site" evidence="1">
    <location>
        <position position="180"/>
    </location>
    <ligand>
        <name>deamido-NAD(+)</name>
        <dbReference type="ChEBI" id="CHEBI:58437"/>
    </ligand>
</feature>
<feature type="binding site" evidence="1">
    <location>
        <position position="189"/>
    </location>
    <ligand>
        <name>ATP</name>
        <dbReference type="ChEBI" id="CHEBI:30616"/>
    </ligand>
</feature>
<feature type="binding site" evidence="1">
    <location>
        <position position="211"/>
    </location>
    <ligand>
        <name>ATP</name>
        <dbReference type="ChEBI" id="CHEBI:30616"/>
    </ligand>
</feature>
<feature type="binding site" evidence="1">
    <location>
        <begin position="260"/>
        <end position="261"/>
    </location>
    <ligand>
        <name>deamido-NAD(+)</name>
        <dbReference type="ChEBI" id="CHEBI:58437"/>
    </ligand>
</feature>